<protein>
    <recommendedName>
        <fullName evidence="1">Tubulin--tyrosine ligase-like protein 12</fullName>
    </recommendedName>
    <alternativeName>
        <fullName evidence="6">Inactive tubulin--tyrosine ligase-like protein 12</fullName>
    </alternativeName>
</protein>
<accession>A8XXC0</accession>
<comment type="function">
    <text evidence="1">Regulates microtubule dynamics in uterine muscle cells.</text>
</comment>
<comment type="similarity">
    <text evidence="6">Belongs to the tubulin--tyrosine ligase family.</text>
</comment>
<comment type="caution">
    <text evidence="2 3">Although it belongs to the tubulin--tyrosine ligase family, the TTL domain lacks some of the ATP binding sites predicted to be essential for TTL activity (By similarity). Lacks tyrosine ligase activity in vitro (By similarity). Lacks glutamylation activity in vitro (By similarity).</text>
</comment>
<sequence>MSPSSSDRLGYPFSTFLDQHSAQLNASAVPPELWHSLYRKLSDQTFDAGDHFQIICEMDENDEKKTLFVRALEDMHNNDEENIFLIDHFISFPAESARKCVESNEKLPERLAALFGIDDDDCSSDGDETVEKIETSCEKEEEEHARRLSEPGLPRHESVDARLSSYSVDDPKKTMTERVMRNLWKFAQTYTVSYQLENGEMEKKHVWYVMDDFGSRIRHSGCPNVRIVPLMFLPQNCAYSIMFLTKPVKIDDEITMDWAANVITAKNPEWRQYLEMPWAEKDFSSESMVPGPPTLEYFTSGRNPDFLADEKDKKTCESAIFSALSVLKKQGKIKIFLQIFADDTQLTEHLKSRQIEYVDDWKAADVIWMIKHFHDYSNLAQENPCAQINQFPFESCITVKDLLAACAMRDPSKNDWYQLTYNLNTQLPEFVARFQNRQKNGEHNVWIVKPWNLARGMEMAVTDDLNQIIRMVETGPKIVCEYIARPLLFPRPDNGNKVKFDLRYIVFVNAIGPVTAYVYNRFWIRFAINQFQLGAYDDLETHFTVFNYLDKEKVLQMKCEKFVEIIEKTYPKLKWTQIQADINSTIRKAIEVAASEPSPRGVAPNTQSRAMYGVDIMLQESPESPDVIKPTLLEINFMPDTTRACQYYPDFADTVFDTMFLDEIDPTKVTPI</sequence>
<dbReference type="EMBL" id="HE601386">
    <property type="protein sequence ID" value="CAP37289.2"/>
    <property type="molecule type" value="Genomic_DNA"/>
</dbReference>
<dbReference type="SMR" id="A8XXC0"/>
<dbReference type="FunCoup" id="A8XXC0">
    <property type="interactions" value="2433"/>
</dbReference>
<dbReference type="STRING" id="6238.A8XXC0"/>
<dbReference type="WormBase" id="CBG20224">
    <property type="protein sequence ID" value="CBP39795"/>
    <property type="gene ID" value="WBGene00039260"/>
    <property type="gene designation" value="Cbr-ttll-12"/>
</dbReference>
<dbReference type="eggNOG" id="KOG2155">
    <property type="taxonomic scope" value="Eukaryota"/>
</dbReference>
<dbReference type="HOGENOM" id="CLU_018324_0_0_1"/>
<dbReference type="InParanoid" id="A8XXC0"/>
<dbReference type="OMA" id="WTPDCKR"/>
<dbReference type="Proteomes" id="UP000008549">
    <property type="component" value="Unassembled WGS sequence"/>
</dbReference>
<dbReference type="GO" id="GO:0005737">
    <property type="term" value="C:cytoplasm"/>
    <property type="evidence" value="ECO:0000318"/>
    <property type="project" value="GO_Central"/>
</dbReference>
<dbReference type="GO" id="GO:0005524">
    <property type="term" value="F:ATP binding"/>
    <property type="evidence" value="ECO:0007669"/>
    <property type="project" value="UniProtKB-KW"/>
</dbReference>
<dbReference type="GO" id="GO:0036211">
    <property type="term" value="P:protein modification process"/>
    <property type="evidence" value="ECO:0007669"/>
    <property type="project" value="InterPro"/>
</dbReference>
<dbReference type="GO" id="GO:0019098">
    <property type="term" value="P:reproductive behavior"/>
    <property type="evidence" value="ECO:0007669"/>
    <property type="project" value="UniProtKB-ARBA"/>
</dbReference>
<dbReference type="Gene3D" id="3.30.470.20">
    <property type="entry name" value="ATP-grasp fold, B domain"/>
    <property type="match status" value="1"/>
</dbReference>
<dbReference type="InterPro" id="IPR004344">
    <property type="entry name" value="TTL/TTLL_fam"/>
</dbReference>
<dbReference type="InterPro" id="IPR027749">
    <property type="entry name" value="TTLL12"/>
</dbReference>
<dbReference type="PANTHER" id="PTHR46088">
    <property type="entry name" value="TUBULIN--TYROSINE LIGASE-LIKE PROTEIN 12"/>
    <property type="match status" value="1"/>
</dbReference>
<dbReference type="PANTHER" id="PTHR46088:SF1">
    <property type="entry name" value="TUBULIN--TYROSINE LIGASE-LIKE PROTEIN 12"/>
    <property type="match status" value="1"/>
</dbReference>
<dbReference type="Pfam" id="PF03133">
    <property type="entry name" value="TTL"/>
    <property type="match status" value="1"/>
</dbReference>
<dbReference type="SUPFAM" id="SSF56059">
    <property type="entry name" value="Glutathione synthetase ATP-binding domain-like"/>
    <property type="match status" value="1"/>
</dbReference>
<dbReference type="PROSITE" id="PS51221">
    <property type="entry name" value="TTL"/>
    <property type="match status" value="1"/>
</dbReference>
<organism>
    <name type="scientific">Caenorhabditis briggsae</name>
    <dbReference type="NCBI Taxonomy" id="6238"/>
    <lineage>
        <taxon>Eukaryota</taxon>
        <taxon>Metazoa</taxon>
        <taxon>Ecdysozoa</taxon>
        <taxon>Nematoda</taxon>
        <taxon>Chromadorea</taxon>
        <taxon>Rhabditida</taxon>
        <taxon>Rhabditina</taxon>
        <taxon>Rhabditomorpha</taxon>
        <taxon>Rhabditoidea</taxon>
        <taxon>Rhabditidae</taxon>
        <taxon>Peloderinae</taxon>
        <taxon>Caenorhabditis</taxon>
    </lineage>
</organism>
<gene>
    <name evidence="7" type="primary">ttll-12</name>
    <name evidence="7" type="ORF">CBG20224</name>
</gene>
<keyword id="KW-0067">ATP-binding</keyword>
<keyword id="KW-0547">Nucleotide-binding</keyword>
<keyword id="KW-1185">Reference proteome</keyword>
<evidence type="ECO:0000250" key="1">
    <source>
        <dbReference type="UniProtKB" id="Q09512"/>
    </source>
</evidence>
<evidence type="ECO:0000250" key="2">
    <source>
        <dbReference type="UniProtKB" id="Q14166"/>
    </source>
</evidence>
<evidence type="ECO:0000250" key="3">
    <source>
        <dbReference type="UniProtKB" id="Q3UDE2"/>
    </source>
</evidence>
<evidence type="ECO:0000250" key="4">
    <source>
        <dbReference type="UniProtKB" id="Q6ZT98"/>
    </source>
</evidence>
<evidence type="ECO:0000255" key="5">
    <source>
        <dbReference type="PROSITE-ProRule" id="PRU00568"/>
    </source>
</evidence>
<evidence type="ECO:0000305" key="6"/>
<evidence type="ECO:0000312" key="7">
    <source>
        <dbReference type="WormBase" id="CBG20224"/>
    </source>
</evidence>
<reference key="1">
    <citation type="journal article" date="2003" name="PLoS Biol.">
        <title>The genome sequence of Caenorhabditis briggsae: a platform for comparative genomics.</title>
        <authorList>
            <person name="Stein L.D."/>
            <person name="Bao Z."/>
            <person name="Blasiar D."/>
            <person name="Blumenthal T."/>
            <person name="Brent M.R."/>
            <person name="Chen N."/>
            <person name="Chinwalla A."/>
            <person name="Clarke L."/>
            <person name="Clee C."/>
            <person name="Coghlan A."/>
            <person name="Coulson A."/>
            <person name="D'Eustachio P."/>
            <person name="Fitch D.H.A."/>
            <person name="Fulton L.A."/>
            <person name="Fulton R.E."/>
            <person name="Griffiths-Jones S."/>
            <person name="Harris T.W."/>
            <person name="Hillier L.W."/>
            <person name="Kamath R."/>
            <person name="Kuwabara P.E."/>
            <person name="Mardis E.R."/>
            <person name="Marra M.A."/>
            <person name="Miner T.L."/>
            <person name="Minx P."/>
            <person name="Mullikin J.C."/>
            <person name="Plumb R.W."/>
            <person name="Rogers J."/>
            <person name="Schein J.E."/>
            <person name="Sohrmann M."/>
            <person name="Spieth J."/>
            <person name="Stajich J.E."/>
            <person name="Wei C."/>
            <person name="Willey D."/>
            <person name="Wilson R.K."/>
            <person name="Durbin R.M."/>
            <person name="Waterston R.H."/>
        </authorList>
    </citation>
    <scope>NUCLEOTIDE SEQUENCE [LARGE SCALE GENOMIC DNA]</scope>
    <source>
        <strain>AF16</strain>
    </source>
</reference>
<proteinExistence type="inferred from homology"/>
<feature type="chain" id="PRO_0000358602" description="Tubulin--tyrosine ligase-like protein 12">
    <location>
        <begin position="1"/>
        <end position="672"/>
    </location>
</feature>
<feature type="domain" description="TTL" evidence="5">
    <location>
        <begin position="332"/>
        <end position="670"/>
    </location>
</feature>
<feature type="binding site" evidence="4">
    <location>
        <begin position="480"/>
        <end position="483"/>
    </location>
    <ligand>
        <name>ATP</name>
        <dbReference type="ChEBI" id="CHEBI:30616"/>
    </ligand>
</feature>
<feature type="binding site" evidence="4">
    <location>
        <position position="499"/>
    </location>
    <ligand>
        <name>ATP</name>
        <dbReference type="ChEBI" id="CHEBI:30616"/>
    </ligand>
</feature>
<feature type="binding site" evidence="4">
    <location>
        <position position="501"/>
    </location>
    <ligand>
        <name>ATP</name>
        <dbReference type="ChEBI" id="CHEBI:30616"/>
    </ligand>
</feature>
<name>TTL12_CAEBR</name>